<comment type="similarity">
    <text evidence="2">Belongs to the snRNP Sm proteins family.</text>
</comment>
<proteinExistence type="inferred from homology"/>
<feature type="chain" id="PRO_0000125598" description="Putative snRNP Sm-like protein">
    <location>
        <begin position="1"/>
        <end position="75"/>
    </location>
</feature>
<feature type="domain" description="Sm" evidence="1">
    <location>
        <begin position="4"/>
        <end position="75"/>
    </location>
</feature>
<evidence type="ECO:0000255" key="1">
    <source>
        <dbReference type="PROSITE-ProRule" id="PRU01346"/>
    </source>
</evidence>
<evidence type="ECO:0000305" key="2"/>
<keyword id="KW-0687">Ribonucleoprotein</keyword>
<dbReference type="EMBL" id="BA000001">
    <property type="protein sequence ID" value="BAA30628.1"/>
    <property type="molecule type" value="Genomic_DNA"/>
</dbReference>
<dbReference type="PIR" id="D71028">
    <property type="entry name" value="D71028"/>
</dbReference>
<dbReference type="RefSeq" id="WP_010885595.1">
    <property type="nucleotide sequence ID" value="NC_000961.1"/>
</dbReference>
<dbReference type="SMR" id="O74016"/>
<dbReference type="MINT" id="O74016"/>
<dbReference type="STRING" id="70601.gene:9378502"/>
<dbReference type="EnsemblBacteria" id="BAA30628">
    <property type="protein sequence ID" value="BAA30628"/>
    <property type="gene ID" value="BAA30628"/>
</dbReference>
<dbReference type="GeneID" id="1443835"/>
<dbReference type="KEGG" id="pho:PHS042"/>
<dbReference type="eggNOG" id="arCOG00998">
    <property type="taxonomic scope" value="Archaea"/>
</dbReference>
<dbReference type="OrthoDB" id="371816at2157"/>
<dbReference type="Proteomes" id="UP000000752">
    <property type="component" value="Chromosome"/>
</dbReference>
<dbReference type="GO" id="GO:1990904">
    <property type="term" value="C:ribonucleoprotein complex"/>
    <property type="evidence" value="ECO:0007669"/>
    <property type="project" value="UniProtKB-KW"/>
</dbReference>
<dbReference type="GO" id="GO:0120114">
    <property type="term" value="C:Sm-like protein family complex"/>
    <property type="evidence" value="ECO:0007669"/>
    <property type="project" value="UniProtKB-ARBA"/>
</dbReference>
<dbReference type="GO" id="GO:0003723">
    <property type="term" value="F:RNA binding"/>
    <property type="evidence" value="ECO:0007669"/>
    <property type="project" value="InterPro"/>
</dbReference>
<dbReference type="GO" id="GO:0000398">
    <property type="term" value="P:mRNA splicing, via spliceosome"/>
    <property type="evidence" value="ECO:0007669"/>
    <property type="project" value="InterPro"/>
</dbReference>
<dbReference type="CDD" id="cd01731">
    <property type="entry name" value="archaeal_Sm1"/>
    <property type="match status" value="1"/>
</dbReference>
<dbReference type="Gene3D" id="2.30.30.100">
    <property type="match status" value="1"/>
</dbReference>
<dbReference type="HAMAP" id="MF_00257">
    <property type="entry name" value="Lsm_RuxX"/>
    <property type="match status" value="1"/>
</dbReference>
<dbReference type="InterPro" id="IPR016487">
    <property type="entry name" value="Lsm6/sSmF"/>
</dbReference>
<dbReference type="InterPro" id="IPR010920">
    <property type="entry name" value="LSM_dom_sf"/>
</dbReference>
<dbReference type="InterPro" id="IPR047575">
    <property type="entry name" value="Sm"/>
</dbReference>
<dbReference type="InterPro" id="IPR001163">
    <property type="entry name" value="Sm_dom_euk/arc"/>
</dbReference>
<dbReference type="InterPro" id="IPR022901">
    <property type="entry name" value="snRNP_Sm-like_arc"/>
</dbReference>
<dbReference type="NCBIfam" id="NF001963">
    <property type="entry name" value="PRK00737.1"/>
    <property type="match status" value="1"/>
</dbReference>
<dbReference type="PANTHER" id="PTHR11021:SF0">
    <property type="entry name" value="SMALL NUCLEAR RIBONUCLEOPROTEIN F"/>
    <property type="match status" value="1"/>
</dbReference>
<dbReference type="PANTHER" id="PTHR11021">
    <property type="entry name" value="SMALL NUCLEAR RIBONUCLEOPROTEIN F SNRNP-F"/>
    <property type="match status" value="1"/>
</dbReference>
<dbReference type="Pfam" id="PF01423">
    <property type="entry name" value="LSM"/>
    <property type="match status" value="1"/>
</dbReference>
<dbReference type="SMART" id="SM00651">
    <property type="entry name" value="Sm"/>
    <property type="match status" value="1"/>
</dbReference>
<dbReference type="SUPFAM" id="SSF50182">
    <property type="entry name" value="Sm-like ribonucleoproteins"/>
    <property type="match status" value="1"/>
</dbReference>
<dbReference type="PROSITE" id="PS52002">
    <property type="entry name" value="SM"/>
    <property type="match status" value="1"/>
</dbReference>
<protein>
    <recommendedName>
        <fullName>Putative snRNP Sm-like protein</fullName>
    </recommendedName>
</protein>
<name>RUXX_PYRHO</name>
<reference key="1">
    <citation type="journal article" date="1998" name="DNA Res.">
        <title>Complete sequence and gene organization of the genome of a hyper-thermophilic archaebacterium, Pyrococcus horikoshii OT3.</title>
        <authorList>
            <person name="Kawarabayasi Y."/>
            <person name="Sawada M."/>
            <person name="Horikawa H."/>
            <person name="Haikawa Y."/>
            <person name="Hino Y."/>
            <person name="Yamamoto S."/>
            <person name="Sekine M."/>
            <person name="Baba S."/>
            <person name="Kosugi H."/>
            <person name="Hosoyama A."/>
            <person name="Nagai Y."/>
            <person name="Sakai M."/>
            <person name="Ogura K."/>
            <person name="Otsuka R."/>
            <person name="Nakazawa H."/>
            <person name="Takamiya M."/>
            <person name="Ohfuku Y."/>
            <person name="Funahashi T."/>
            <person name="Tanaka T."/>
            <person name="Kudoh Y."/>
            <person name="Yamazaki J."/>
            <person name="Kushida N."/>
            <person name="Oguchi A."/>
            <person name="Aoki K."/>
            <person name="Yoshizawa T."/>
            <person name="Nakamura Y."/>
            <person name="Robb F.T."/>
            <person name="Horikoshi K."/>
            <person name="Masuchi Y."/>
            <person name="Shizuya H."/>
            <person name="Kikuchi H."/>
        </authorList>
    </citation>
    <scope>NUCLEOTIDE SEQUENCE [LARGE SCALE GENOMIC DNA]</scope>
    <source>
        <strain>ATCC 700860 / DSM 12428 / JCM 9974 / NBRC 100139 / OT-3</strain>
    </source>
</reference>
<accession>O74016</accession>
<organism>
    <name type="scientific">Pyrococcus horikoshii (strain ATCC 700860 / DSM 12428 / JCM 9974 / NBRC 100139 / OT-3)</name>
    <dbReference type="NCBI Taxonomy" id="70601"/>
    <lineage>
        <taxon>Archaea</taxon>
        <taxon>Methanobacteriati</taxon>
        <taxon>Methanobacteriota</taxon>
        <taxon>Thermococci</taxon>
        <taxon>Thermococcales</taxon>
        <taxon>Thermococcaceae</taxon>
        <taxon>Pyrococcus</taxon>
    </lineage>
</organism>
<gene>
    <name type="ordered locus">PH1518.2</name>
    <name type="ORF">PHS042</name>
</gene>
<sequence length="75" mass="8447">MAERPLDVIHRSLDKDVLVILKKGFEFRGRLIGYDIHLNVVLADAEMVQDGEVVKKYGKIVIRGDNVLAISPTEE</sequence>